<evidence type="ECO:0000255" key="1">
    <source>
        <dbReference type="HAMAP-Rule" id="MF_01390"/>
    </source>
</evidence>
<accession>Q6PSB9</accession>
<geneLocation type="chloroplast"/>
<organism>
    <name type="scientific">Vigna mungo</name>
    <name type="common">Black gram</name>
    <name type="synonym">Phaseolus mungo</name>
    <dbReference type="NCBI Taxonomy" id="3915"/>
    <lineage>
        <taxon>Eukaryota</taxon>
        <taxon>Viridiplantae</taxon>
        <taxon>Streptophyta</taxon>
        <taxon>Embryophyta</taxon>
        <taxon>Tracheophyta</taxon>
        <taxon>Spermatophyta</taxon>
        <taxon>Magnoliopsida</taxon>
        <taxon>eudicotyledons</taxon>
        <taxon>Gunneridae</taxon>
        <taxon>Pentapetalae</taxon>
        <taxon>rosids</taxon>
        <taxon>fabids</taxon>
        <taxon>Fabales</taxon>
        <taxon>Fabaceae</taxon>
        <taxon>Papilionoideae</taxon>
        <taxon>50 kb inversion clade</taxon>
        <taxon>NPAAA clade</taxon>
        <taxon>indigoferoid/millettioid clade</taxon>
        <taxon>Phaseoleae</taxon>
        <taxon>Vigna</taxon>
    </lineage>
</organism>
<feature type="chain" id="PRO_0000143785" description="Maturase K">
    <location>
        <begin position="1"/>
        <end position="504"/>
    </location>
</feature>
<sequence length="504" mass="61685">MEQYKAYLELHRSRYQDILYPLFFRESIYGLAYRHESFFIENVDYNNNFSLLIVKRLSTRMYQQTHFILFVNDSKKNTFVGYNYHFYSQIILEGFGIVVEILFSLQLFSSSFRGLEIVKSYTNLQSIHSIFPFFEDKLIYLNHKSDIRIPYPIHLEILVQILRYSIKDVSFFHLIRLFFYYYSNWNSLFPPKKWIFTFFSKRNRRIFLFLYNLYVWEYESIFLFLRNKSSQLQLKHFRVFFERIFFYEKIKHLVKVSTKNCSYTLFFFKDTFIHYVRYQGKSILVLKNTPFLINKWKYYFIYLWQCHFDIWAGLETIYINELSQYSFHFLGYFLSIPLNLSVVRSQMLQNSFLIQIVIKKLDTIVPIIPLMRSLAKTKFCNVMGHPISKPVWANLSDFDILDRFLRICRNFSHYYNGSAKKKSFYQIKYILRFSCIKTLARKHKSTVRIYLKKLSSEKLLEEFFTEEDLFSLIFPRTSLTLRRFYRGRIWYLDILFRNDFVNYL</sequence>
<reference key="1">
    <citation type="journal article" date="2004" name="Syst. Bot.">
        <title>Phylogeny and biogeography of Wajira (Leguminosae): a monophyletic segregate of Vigna centered in the horn of Africa region.</title>
        <authorList>
            <person name="Thulin M."/>
            <person name="Lavin M."/>
            <person name="Pasquet R."/>
            <person name="Delgado-Salinas A."/>
        </authorList>
        <dbReference type="AGRICOLA" id="IND43667961"/>
    </citation>
    <scope>NUCLEOTIDE SEQUENCE [GENOMIC DNA]</scope>
</reference>
<proteinExistence type="inferred from homology"/>
<comment type="function">
    <text evidence="1">Usually encoded in the trnK tRNA gene intron. Probably assists in splicing its own and other chloroplast group II introns.</text>
</comment>
<comment type="subcellular location">
    <subcellularLocation>
        <location>Plastid</location>
        <location>Chloroplast</location>
    </subcellularLocation>
</comment>
<comment type="similarity">
    <text evidence="1">Belongs to the intron maturase 2 family. MatK subfamily.</text>
</comment>
<name>MATK_VIGMU</name>
<protein>
    <recommendedName>
        <fullName evidence="1">Maturase K</fullName>
    </recommendedName>
    <alternativeName>
        <fullName evidence="1">Intron maturase</fullName>
    </alternativeName>
</protein>
<keyword id="KW-0150">Chloroplast</keyword>
<keyword id="KW-0507">mRNA processing</keyword>
<keyword id="KW-0934">Plastid</keyword>
<keyword id="KW-0694">RNA-binding</keyword>
<keyword id="KW-0819">tRNA processing</keyword>
<dbReference type="EMBL" id="AY582994">
    <property type="protein sequence ID" value="AAS94293.1"/>
    <property type="molecule type" value="Genomic_DNA"/>
</dbReference>
<dbReference type="RefSeq" id="YP_009917476.1">
    <property type="nucleotide sequence ID" value="NC_050260.1"/>
</dbReference>
<dbReference type="GeneID" id="58900047"/>
<dbReference type="GO" id="GO:0009507">
    <property type="term" value="C:chloroplast"/>
    <property type="evidence" value="ECO:0007669"/>
    <property type="project" value="UniProtKB-SubCell"/>
</dbReference>
<dbReference type="GO" id="GO:0003723">
    <property type="term" value="F:RNA binding"/>
    <property type="evidence" value="ECO:0007669"/>
    <property type="project" value="UniProtKB-KW"/>
</dbReference>
<dbReference type="GO" id="GO:0006397">
    <property type="term" value="P:mRNA processing"/>
    <property type="evidence" value="ECO:0007669"/>
    <property type="project" value="UniProtKB-KW"/>
</dbReference>
<dbReference type="GO" id="GO:0008380">
    <property type="term" value="P:RNA splicing"/>
    <property type="evidence" value="ECO:0007669"/>
    <property type="project" value="UniProtKB-UniRule"/>
</dbReference>
<dbReference type="GO" id="GO:0008033">
    <property type="term" value="P:tRNA processing"/>
    <property type="evidence" value="ECO:0007669"/>
    <property type="project" value="UniProtKB-KW"/>
</dbReference>
<dbReference type="HAMAP" id="MF_01390">
    <property type="entry name" value="MatK"/>
    <property type="match status" value="1"/>
</dbReference>
<dbReference type="InterPro" id="IPR024937">
    <property type="entry name" value="Domain_X"/>
</dbReference>
<dbReference type="InterPro" id="IPR002866">
    <property type="entry name" value="Maturase_MatK"/>
</dbReference>
<dbReference type="InterPro" id="IPR024942">
    <property type="entry name" value="Maturase_MatK_N"/>
</dbReference>
<dbReference type="PANTHER" id="PTHR34811">
    <property type="entry name" value="MATURASE K"/>
    <property type="match status" value="1"/>
</dbReference>
<dbReference type="PANTHER" id="PTHR34811:SF1">
    <property type="entry name" value="MATURASE K"/>
    <property type="match status" value="1"/>
</dbReference>
<dbReference type="Pfam" id="PF01348">
    <property type="entry name" value="Intron_maturas2"/>
    <property type="match status" value="1"/>
</dbReference>
<dbReference type="Pfam" id="PF01824">
    <property type="entry name" value="MatK_N"/>
    <property type="match status" value="1"/>
</dbReference>
<gene>
    <name evidence="1" type="primary">matK</name>
</gene>